<protein>
    <recommendedName>
        <fullName evidence="1">3-dehydroquinate synthase</fullName>
        <shortName evidence="1">DHQS</shortName>
        <ecNumber evidence="1">4.2.3.4</ecNumber>
    </recommendedName>
</protein>
<evidence type="ECO:0000255" key="1">
    <source>
        <dbReference type="HAMAP-Rule" id="MF_00110"/>
    </source>
</evidence>
<feature type="chain" id="PRO_1000094635" description="3-dehydroquinate synthase">
    <location>
        <begin position="1"/>
        <end position="355"/>
    </location>
</feature>
<feature type="binding site" evidence="1">
    <location>
        <begin position="71"/>
        <end position="76"/>
    </location>
    <ligand>
        <name>NAD(+)</name>
        <dbReference type="ChEBI" id="CHEBI:57540"/>
    </ligand>
</feature>
<feature type="binding site" evidence="1">
    <location>
        <begin position="105"/>
        <end position="109"/>
    </location>
    <ligand>
        <name>NAD(+)</name>
        <dbReference type="ChEBI" id="CHEBI:57540"/>
    </ligand>
</feature>
<feature type="binding site" evidence="1">
    <location>
        <begin position="129"/>
        <end position="130"/>
    </location>
    <ligand>
        <name>NAD(+)</name>
        <dbReference type="ChEBI" id="CHEBI:57540"/>
    </ligand>
</feature>
<feature type="binding site" evidence="1">
    <location>
        <position position="142"/>
    </location>
    <ligand>
        <name>NAD(+)</name>
        <dbReference type="ChEBI" id="CHEBI:57540"/>
    </ligand>
</feature>
<feature type="binding site" evidence="1">
    <location>
        <position position="151"/>
    </location>
    <ligand>
        <name>NAD(+)</name>
        <dbReference type="ChEBI" id="CHEBI:57540"/>
    </ligand>
</feature>
<feature type="binding site" evidence="1">
    <location>
        <position position="184"/>
    </location>
    <ligand>
        <name>Zn(2+)</name>
        <dbReference type="ChEBI" id="CHEBI:29105"/>
    </ligand>
</feature>
<feature type="binding site" evidence="1">
    <location>
        <position position="246"/>
    </location>
    <ligand>
        <name>Zn(2+)</name>
        <dbReference type="ChEBI" id="CHEBI:29105"/>
    </ligand>
</feature>
<feature type="binding site" evidence="1">
    <location>
        <position position="263"/>
    </location>
    <ligand>
        <name>Zn(2+)</name>
        <dbReference type="ChEBI" id="CHEBI:29105"/>
    </ligand>
</feature>
<dbReference type="EC" id="4.2.3.4" evidence="1"/>
<dbReference type="EMBL" id="CP001015">
    <property type="protein sequence ID" value="ACF54782.1"/>
    <property type="molecule type" value="Genomic_DNA"/>
</dbReference>
<dbReference type="KEGG" id="spx:SPG_1316"/>
<dbReference type="HOGENOM" id="CLU_001201_0_2_9"/>
<dbReference type="UniPathway" id="UPA00053">
    <property type="reaction ID" value="UER00085"/>
</dbReference>
<dbReference type="GO" id="GO:0005737">
    <property type="term" value="C:cytoplasm"/>
    <property type="evidence" value="ECO:0007669"/>
    <property type="project" value="UniProtKB-SubCell"/>
</dbReference>
<dbReference type="GO" id="GO:0003856">
    <property type="term" value="F:3-dehydroquinate synthase activity"/>
    <property type="evidence" value="ECO:0007669"/>
    <property type="project" value="UniProtKB-UniRule"/>
</dbReference>
<dbReference type="GO" id="GO:0046872">
    <property type="term" value="F:metal ion binding"/>
    <property type="evidence" value="ECO:0007669"/>
    <property type="project" value="UniProtKB-KW"/>
</dbReference>
<dbReference type="GO" id="GO:0000166">
    <property type="term" value="F:nucleotide binding"/>
    <property type="evidence" value="ECO:0007669"/>
    <property type="project" value="UniProtKB-KW"/>
</dbReference>
<dbReference type="GO" id="GO:0008652">
    <property type="term" value="P:amino acid biosynthetic process"/>
    <property type="evidence" value="ECO:0007669"/>
    <property type="project" value="UniProtKB-KW"/>
</dbReference>
<dbReference type="GO" id="GO:0009073">
    <property type="term" value="P:aromatic amino acid family biosynthetic process"/>
    <property type="evidence" value="ECO:0007669"/>
    <property type="project" value="UniProtKB-KW"/>
</dbReference>
<dbReference type="GO" id="GO:0009423">
    <property type="term" value="P:chorismate biosynthetic process"/>
    <property type="evidence" value="ECO:0007669"/>
    <property type="project" value="UniProtKB-UniRule"/>
</dbReference>
<dbReference type="CDD" id="cd08195">
    <property type="entry name" value="DHQS"/>
    <property type="match status" value="1"/>
</dbReference>
<dbReference type="FunFam" id="1.20.1090.10:FF:000012">
    <property type="entry name" value="3-dehydroquinate synthase"/>
    <property type="match status" value="1"/>
</dbReference>
<dbReference type="FunFam" id="3.40.50.1970:FF:000001">
    <property type="entry name" value="3-dehydroquinate synthase"/>
    <property type="match status" value="1"/>
</dbReference>
<dbReference type="Gene3D" id="3.40.50.1970">
    <property type="match status" value="1"/>
</dbReference>
<dbReference type="Gene3D" id="1.20.1090.10">
    <property type="entry name" value="Dehydroquinate synthase-like - alpha domain"/>
    <property type="match status" value="1"/>
</dbReference>
<dbReference type="HAMAP" id="MF_00110">
    <property type="entry name" value="DHQ_synthase"/>
    <property type="match status" value="1"/>
</dbReference>
<dbReference type="InterPro" id="IPR050071">
    <property type="entry name" value="Dehydroquinate_synthase"/>
</dbReference>
<dbReference type="InterPro" id="IPR016037">
    <property type="entry name" value="DHQ_synth_AroB"/>
</dbReference>
<dbReference type="InterPro" id="IPR030963">
    <property type="entry name" value="DHQ_synth_fam"/>
</dbReference>
<dbReference type="InterPro" id="IPR030960">
    <property type="entry name" value="DHQS/DOIS_N"/>
</dbReference>
<dbReference type="InterPro" id="IPR056179">
    <property type="entry name" value="DHQS_C"/>
</dbReference>
<dbReference type="NCBIfam" id="TIGR01357">
    <property type="entry name" value="aroB"/>
    <property type="match status" value="1"/>
</dbReference>
<dbReference type="PANTHER" id="PTHR43622">
    <property type="entry name" value="3-DEHYDROQUINATE SYNTHASE"/>
    <property type="match status" value="1"/>
</dbReference>
<dbReference type="PANTHER" id="PTHR43622:SF7">
    <property type="entry name" value="3-DEHYDROQUINATE SYNTHASE, CHLOROPLASTIC"/>
    <property type="match status" value="1"/>
</dbReference>
<dbReference type="Pfam" id="PF01761">
    <property type="entry name" value="DHQ_synthase"/>
    <property type="match status" value="1"/>
</dbReference>
<dbReference type="Pfam" id="PF24621">
    <property type="entry name" value="DHQS_C"/>
    <property type="match status" value="1"/>
</dbReference>
<dbReference type="PIRSF" id="PIRSF001455">
    <property type="entry name" value="DHQ_synth"/>
    <property type="match status" value="1"/>
</dbReference>
<dbReference type="SUPFAM" id="SSF56796">
    <property type="entry name" value="Dehydroquinate synthase-like"/>
    <property type="match status" value="1"/>
</dbReference>
<organism>
    <name type="scientific">Streptococcus pneumoniae serotype 19F (strain G54)</name>
    <dbReference type="NCBI Taxonomy" id="512566"/>
    <lineage>
        <taxon>Bacteria</taxon>
        <taxon>Bacillati</taxon>
        <taxon>Bacillota</taxon>
        <taxon>Bacilli</taxon>
        <taxon>Lactobacillales</taxon>
        <taxon>Streptococcaceae</taxon>
        <taxon>Streptococcus</taxon>
    </lineage>
</organism>
<gene>
    <name evidence="1" type="primary">aroB</name>
    <name type="ordered locus">SPG_1316</name>
</gene>
<accession>B5E5N3</accession>
<proteinExistence type="inferred from homology"/>
<reference key="1">
    <citation type="journal article" date="2001" name="Microb. Drug Resist.">
        <title>Annotated draft genomic sequence from a Streptococcus pneumoniae type 19F clinical isolate.</title>
        <authorList>
            <person name="Dopazo J."/>
            <person name="Mendoza A."/>
            <person name="Herrero J."/>
            <person name="Caldara F."/>
            <person name="Humbert Y."/>
            <person name="Friedli L."/>
            <person name="Guerrier M."/>
            <person name="Grand-Schenk E."/>
            <person name="Gandin C."/>
            <person name="de Francesco M."/>
            <person name="Polissi A."/>
            <person name="Buell G."/>
            <person name="Feger G."/>
            <person name="Garcia E."/>
            <person name="Peitsch M."/>
            <person name="Garcia-Bustos J.F."/>
        </authorList>
    </citation>
    <scope>NUCLEOTIDE SEQUENCE [LARGE SCALE GENOMIC DNA]</scope>
    <source>
        <strain>G54</strain>
    </source>
</reference>
<reference key="2">
    <citation type="submission" date="2008-03" db="EMBL/GenBank/DDBJ databases">
        <title>Pneumococcal beta glucoside metabolism investigated by whole genome comparison.</title>
        <authorList>
            <person name="Mulas L."/>
            <person name="Trappetti C."/>
            <person name="Hakenbeck R."/>
            <person name="Iannelli F."/>
            <person name="Pozzi G."/>
            <person name="Davidsen T.M."/>
            <person name="Tettelin H."/>
            <person name="Oggioni M."/>
        </authorList>
    </citation>
    <scope>NUCLEOTIDE SEQUENCE [LARGE SCALE GENOMIC DNA]</scope>
    <source>
        <strain>G54</strain>
    </source>
</reference>
<name>AROB_STRP4</name>
<comment type="function">
    <text evidence="1">Catalyzes the conversion of 3-deoxy-D-arabino-heptulosonate 7-phosphate (DAHP) to dehydroquinate (DHQ).</text>
</comment>
<comment type="catalytic activity">
    <reaction evidence="1">
        <text>7-phospho-2-dehydro-3-deoxy-D-arabino-heptonate = 3-dehydroquinate + phosphate</text>
        <dbReference type="Rhea" id="RHEA:21968"/>
        <dbReference type="ChEBI" id="CHEBI:32364"/>
        <dbReference type="ChEBI" id="CHEBI:43474"/>
        <dbReference type="ChEBI" id="CHEBI:58394"/>
        <dbReference type="EC" id="4.2.3.4"/>
    </reaction>
</comment>
<comment type="cofactor">
    <cofactor evidence="1">
        <name>Co(2+)</name>
        <dbReference type="ChEBI" id="CHEBI:48828"/>
    </cofactor>
    <cofactor evidence="1">
        <name>Zn(2+)</name>
        <dbReference type="ChEBI" id="CHEBI:29105"/>
    </cofactor>
    <text evidence="1">Binds 1 divalent metal cation per subunit. Can use either Co(2+) or Zn(2+).</text>
</comment>
<comment type="cofactor">
    <cofactor evidence="1">
        <name>NAD(+)</name>
        <dbReference type="ChEBI" id="CHEBI:57540"/>
    </cofactor>
</comment>
<comment type="pathway">
    <text evidence="1">Metabolic intermediate biosynthesis; chorismate biosynthesis; chorismate from D-erythrose 4-phosphate and phosphoenolpyruvate: step 2/7.</text>
</comment>
<comment type="subcellular location">
    <subcellularLocation>
        <location evidence="1">Cytoplasm</location>
    </subcellularLocation>
</comment>
<comment type="similarity">
    <text evidence="1">Belongs to the sugar phosphate cyclases superfamily. Dehydroquinate synthase family.</text>
</comment>
<keyword id="KW-0028">Amino-acid biosynthesis</keyword>
<keyword id="KW-0057">Aromatic amino acid biosynthesis</keyword>
<keyword id="KW-0170">Cobalt</keyword>
<keyword id="KW-0963">Cytoplasm</keyword>
<keyword id="KW-0456">Lyase</keyword>
<keyword id="KW-0479">Metal-binding</keyword>
<keyword id="KW-0520">NAD</keyword>
<keyword id="KW-0547">Nucleotide-binding</keyword>
<keyword id="KW-0862">Zinc</keyword>
<sequence>MKIRIDIPHHPYDIQIEKGCMAQAGQWLRELWQPQKVVIVTDNHVASLYAEKVKLSLEDAGFQVAVFDFLEGEERKNLTTVQKVYEFLVKQGLTRSDGIVALGGGVVGDLAGFVASTYMRGIHFVQIPTSLTAQVDSSIGGKTGVNTPFAKNMVGTFAQPDGVLIDPLVLETLGKRELIEGMGEVIKYGLIEDPELWALLTGLNGSVESILEHAETLIXHSCQVKRKMVVEDELDNGIRLYLNFGHTIGHAIEATAGYGKVMHGEAVAMGMVQISKIAEEKGLMPAGITQSITEMCQKFGLPVDYENWEVDKLYQALTHDKKARGNTLKLVLVPELGSATIHPVSLEEMKDYLVK</sequence>